<dbReference type="EMBL" id="CP000267">
    <property type="protein sequence ID" value="ABD70299.1"/>
    <property type="molecule type" value="Genomic_DNA"/>
</dbReference>
<dbReference type="RefSeq" id="WP_011464867.1">
    <property type="nucleotide sequence ID" value="NC_007908.1"/>
</dbReference>
<dbReference type="SMR" id="Q21VA4"/>
<dbReference type="STRING" id="338969.Rfer_2582"/>
<dbReference type="KEGG" id="rfr:Rfer_2582"/>
<dbReference type="eggNOG" id="COG3004">
    <property type="taxonomic scope" value="Bacteria"/>
</dbReference>
<dbReference type="HOGENOM" id="CLU_015803_1_0_4"/>
<dbReference type="OrthoDB" id="9808135at2"/>
<dbReference type="Proteomes" id="UP000008332">
    <property type="component" value="Chromosome"/>
</dbReference>
<dbReference type="GO" id="GO:0005886">
    <property type="term" value="C:plasma membrane"/>
    <property type="evidence" value="ECO:0007669"/>
    <property type="project" value="UniProtKB-SubCell"/>
</dbReference>
<dbReference type="GO" id="GO:0015385">
    <property type="term" value="F:sodium:proton antiporter activity"/>
    <property type="evidence" value="ECO:0007669"/>
    <property type="project" value="TreeGrafter"/>
</dbReference>
<dbReference type="GO" id="GO:0006885">
    <property type="term" value="P:regulation of pH"/>
    <property type="evidence" value="ECO:0007669"/>
    <property type="project" value="InterPro"/>
</dbReference>
<dbReference type="Gene3D" id="1.20.1530.10">
    <property type="entry name" value="Na+/H+ antiporter like domain"/>
    <property type="match status" value="1"/>
</dbReference>
<dbReference type="HAMAP" id="MF_01844">
    <property type="entry name" value="NhaA"/>
    <property type="match status" value="1"/>
</dbReference>
<dbReference type="InterPro" id="IPR023171">
    <property type="entry name" value="Na/H_antiporter_dom_sf"/>
</dbReference>
<dbReference type="InterPro" id="IPR004670">
    <property type="entry name" value="NhaA"/>
</dbReference>
<dbReference type="NCBIfam" id="TIGR00773">
    <property type="entry name" value="NhaA"/>
    <property type="match status" value="1"/>
</dbReference>
<dbReference type="NCBIfam" id="NF007111">
    <property type="entry name" value="PRK09560.1"/>
    <property type="match status" value="1"/>
</dbReference>
<dbReference type="NCBIfam" id="NF007112">
    <property type="entry name" value="PRK09561.1"/>
    <property type="match status" value="1"/>
</dbReference>
<dbReference type="PANTHER" id="PTHR30341:SF0">
    <property type="entry name" value="NA(+)_H(+) ANTIPORTER NHAA"/>
    <property type="match status" value="1"/>
</dbReference>
<dbReference type="PANTHER" id="PTHR30341">
    <property type="entry name" value="SODIUM ION/PROTON ANTIPORTER NHAA-RELATED"/>
    <property type="match status" value="1"/>
</dbReference>
<dbReference type="Pfam" id="PF06965">
    <property type="entry name" value="Na_H_antiport_1"/>
    <property type="match status" value="1"/>
</dbReference>
<name>NHAA_ALBFT</name>
<protein>
    <recommendedName>
        <fullName evidence="1">Na(+)/H(+) antiporter NhaA</fullName>
    </recommendedName>
    <alternativeName>
        <fullName evidence="1">Sodium/proton antiporter NhaA</fullName>
    </alternativeName>
</protein>
<sequence length="393" mass="41334">MLKVIARRIDQFINSQSAGGVLLALSALVALVISNSPWRSYYQQFLQIPGSVKMGADWLLLSKPMLIWINDLWMAVFFFLVGLEIKRELLNGELASLKQAMLPAVAALGGMAVPALIYAAINWGEPVGLRGWGIPMATDIAFALGLLVLLGSRVPTSLKVFLTAVAIIDDLGAILVIAFFYTDNLSPTMLLAAGLGALVLLGLNRARVMAVGPYVVVGLVIWVCVLKSGIHATLAGVITALAIPLADGKGGSPLERAEHALQPWVAFLVLPVFAFANAGVSLQGVTLATLTQTVPLGIAFGLLIGKPIGVFGASWLLIRLTDAQLPDQCRWSQFFGVCVLCGVGFTMSLFIGSLAFEGADAAYEVQVKIGVLLGSLLSGAAGVALLLASRKAV</sequence>
<gene>
    <name evidence="1" type="primary">nhaA</name>
    <name type="ordered locus">Rfer_2582</name>
</gene>
<reference key="1">
    <citation type="submission" date="2006-02" db="EMBL/GenBank/DDBJ databases">
        <title>Complete sequence of chromosome of Rhodoferax ferrireducens DSM 15236.</title>
        <authorList>
            <person name="Copeland A."/>
            <person name="Lucas S."/>
            <person name="Lapidus A."/>
            <person name="Barry K."/>
            <person name="Detter J.C."/>
            <person name="Glavina del Rio T."/>
            <person name="Hammon N."/>
            <person name="Israni S."/>
            <person name="Pitluck S."/>
            <person name="Brettin T."/>
            <person name="Bruce D."/>
            <person name="Han C."/>
            <person name="Tapia R."/>
            <person name="Gilna P."/>
            <person name="Kiss H."/>
            <person name="Schmutz J."/>
            <person name="Larimer F."/>
            <person name="Land M."/>
            <person name="Kyrpides N."/>
            <person name="Ivanova N."/>
            <person name="Richardson P."/>
        </authorList>
    </citation>
    <scope>NUCLEOTIDE SEQUENCE [LARGE SCALE GENOMIC DNA]</scope>
    <source>
        <strain>ATCC BAA-621 / DSM 15236 / T118</strain>
    </source>
</reference>
<accession>Q21VA4</accession>
<comment type="function">
    <text evidence="1">Na(+)/H(+) antiporter that extrudes sodium in exchange for external protons.</text>
</comment>
<comment type="catalytic activity">
    <reaction evidence="1">
        <text>Na(+)(in) + 2 H(+)(out) = Na(+)(out) + 2 H(+)(in)</text>
        <dbReference type="Rhea" id="RHEA:29251"/>
        <dbReference type="ChEBI" id="CHEBI:15378"/>
        <dbReference type="ChEBI" id="CHEBI:29101"/>
    </reaction>
    <physiologicalReaction direction="left-to-right" evidence="1">
        <dbReference type="Rhea" id="RHEA:29252"/>
    </physiologicalReaction>
</comment>
<comment type="subcellular location">
    <subcellularLocation>
        <location evidence="1">Cell inner membrane</location>
        <topology evidence="1">Multi-pass membrane protein</topology>
    </subcellularLocation>
</comment>
<comment type="similarity">
    <text evidence="1">Belongs to the NhaA Na(+)/H(+) (TC 2.A.33) antiporter family.</text>
</comment>
<organism>
    <name type="scientific">Albidiferax ferrireducens (strain ATCC BAA-621 / DSM 15236 / T118)</name>
    <name type="common">Rhodoferax ferrireducens</name>
    <dbReference type="NCBI Taxonomy" id="338969"/>
    <lineage>
        <taxon>Bacteria</taxon>
        <taxon>Pseudomonadati</taxon>
        <taxon>Pseudomonadota</taxon>
        <taxon>Betaproteobacteria</taxon>
        <taxon>Burkholderiales</taxon>
        <taxon>Comamonadaceae</taxon>
        <taxon>Rhodoferax</taxon>
    </lineage>
</organism>
<evidence type="ECO:0000255" key="1">
    <source>
        <dbReference type="HAMAP-Rule" id="MF_01844"/>
    </source>
</evidence>
<feature type="chain" id="PRO_0000334392" description="Na(+)/H(+) antiporter NhaA">
    <location>
        <begin position="1"/>
        <end position="393"/>
    </location>
</feature>
<feature type="transmembrane region" description="Helical" evidence="1">
    <location>
        <begin position="18"/>
        <end position="38"/>
    </location>
</feature>
<feature type="transmembrane region" description="Helical" evidence="1">
    <location>
        <begin position="65"/>
        <end position="85"/>
    </location>
</feature>
<feature type="transmembrane region" description="Helical" evidence="1">
    <location>
        <begin position="101"/>
        <end position="121"/>
    </location>
</feature>
<feature type="transmembrane region" description="Helical" evidence="1">
    <location>
        <begin position="131"/>
        <end position="151"/>
    </location>
</feature>
<feature type="transmembrane region" description="Helical" evidence="1">
    <location>
        <begin position="160"/>
        <end position="180"/>
    </location>
</feature>
<feature type="transmembrane region" description="Helical" evidence="1">
    <location>
        <begin position="184"/>
        <end position="204"/>
    </location>
</feature>
<feature type="transmembrane region" description="Helical" evidence="1">
    <location>
        <begin position="210"/>
        <end position="230"/>
    </location>
</feature>
<feature type="transmembrane region" description="Helical" evidence="1">
    <location>
        <begin position="260"/>
        <end position="280"/>
    </location>
</feature>
<feature type="transmembrane region" description="Helical" evidence="1">
    <location>
        <begin position="298"/>
        <end position="318"/>
    </location>
</feature>
<feature type="transmembrane region" description="Helical" evidence="1">
    <location>
        <begin position="334"/>
        <end position="354"/>
    </location>
</feature>
<feature type="transmembrane region" description="Helical" evidence="1">
    <location>
        <begin position="369"/>
        <end position="389"/>
    </location>
</feature>
<proteinExistence type="inferred from homology"/>
<keyword id="KW-0050">Antiport</keyword>
<keyword id="KW-0997">Cell inner membrane</keyword>
<keyword id="KW-1003">Cell membrane</keyword>
<keyword id="KW-0406">Ion transport</keyword>
<keyword id="KW-0472">Membrane</keyword>
<keyword id="KW-1185">Reference proteome</keyword>
<keyword id="KW-0915">Sodium</keyword>
<keyword id="KW-0739">Sodium transport</keyword>
<keyword id="KW-0812">Transmembrane</keyword>
<keyword id="KW-1133">Transmembrane helix</keyword>
<keyword id="KW-0813">Transport</keyword>